<keyword id="KW-0687">Ribonucleoprotein</keyword>
<keyword id="KW-0689">Ribosomal protein</keyword>
<keyword id="KW-0694">RNA-binding</keyword>
<keyword id="KW-0699">rRNA-binding</keyword>
<keyword id="KW-0820">tRNA-binding</keyword>
<reference key="1">
    <citation type="submission" date="2005-08" db="EMBL/GenBank/DDBJ databases">
        <title>Complete sequence of Chlorobium chlorochromatii CaD3.</title>
        <authorList>
            <consortium name="US DOE Joint Genome Institute"/>
            <person name="Copeland A."/>
            <person name="Lucas S."/>
            <person name="Lapidus A."/>
            <person name="Barry K."/>
            <person name="Detter J.C."/>
            <person name="Glavina T."/>
            <person name="Hammon N."/>
            <person name="Israni S."/>
            <person name="Pitluck S."/>
            <person name="Bryant D."/>
            <person name="Schmutz J."/>
            <person name="Larimer F."/>
            <person name="Land M."/>
            <person name="Kyrpides N."/>
            <person name="Ivanova N."/>
            <person name="Richardson P."/>
        </authorList>
    </citation>
    <scope>NUCLEOTIDE SEQUENCE [LARGE SCALE GENOMIC DNA]</scope>
    <source>
        <strain>CaD3</strain>
    </source>
</reference>
<sequence length="125" mass="14071">MRLAGVNLPLNKHAVIALTHVYGIGRTSAENILRKAGIAYDKKISELSDEEAHAIREIIAEEYKVEGQARGEQQTAIKRLMDIGCYRGLRHRRSLPVRGQRTRTNARTRKGKRKTVAGKKKAVKK</sequence>
<dbReference type="EMBL" id="CP000108">
    <property type="protein sequence ID" value="ABB29078.1"/>
    <property type="molecule type" value="Genomic_DNA"/>
</dbReference>
<dbReference type="SMR" id="Q3APJ7"/>
<dbReference type="STRING" id="340177.Cag_1827"/>
<dbReference type="KEGG" id="cch:Cag_1827"/>
<dbReference type="eggNOG" id="COG0099">
    <property type="taxonomic scope" value="Bacteria"/>
</dbReference>
<dbReference type="HOGENOM" id="CLU_103849_1_2_10"/>
<dbReference type="OrthoDB" id="9803610at2"/>
<dbReference type="GO" id="GO:0005829">
    <property type="term" value="C:cytosol"/>
    <property type="evidence" value="ECO:0007669"/>
    <property type="project" value="TreeGrafter"/>
</dbReference>
<dbReference type="GO" id="GO:0015935">
    <property type="term" value="C:small ribosomal subunit"/>
    <property type="evidence" value="ECO:0007669"/>
    <property type="project" value="TreeGrafter"/>
</dbReference>
<dbReference type="GO" id="GO:0019843">
    <property type="term" value="F:rRNA binding"/>
    <property type="evidence" value="ECO:0007669"/>
    <property type="project" value="UniProtKB-UniRule"/>
</dbReference>
<dbReference type="GO" id="GO:0003735">
    <property type="term" value="F:structural constituent of ribosome"/>
    <property type="evidence" value="ECO:0007669"/>
    <property type="project" value="InterPro"/>
</dbReference>
<dbReference type="GO" id="GO:0000049">
    <property type="term" value="F:tRNA binding"/>
    <property type="evidence" value="ECO:0007669"/>
    <property type="project" value="UniProtKB-UniRule"/>
</dbReference>
<dbReference type="GO" id="GO:0006412">
    <property type="term" value="P:translation"/>
    <property type="evidence" value="ECO:0007669"/>
    <property type="project" value="UniProtKB-UniRule"/>
</dbReference>
<dbReference type="FunFam" id="1.10.8.50:FF:000001">
    <property type="entry name" value="30S ribosomal protein S13"/>
    <property type="match status" value="1"/>
</dbReference>
<dbReference type="FunFam" id="4.10.910.10:FF:000001">
    <property type="entry name" value="30S ribosomal protein S13"/>
    <property type="match status" value="1"/>
</dbReference>
<dbReference type="Gene3D" id="1.10.8.50">
    <property type="match status" value="1"/>
</dbReference>
<dbReference type="Gene3D" id="4.10.910.10">
    <property type="entry name" value="30s ribosomal protein s13, domain 2"/>
    <property type="match status" value="1"/>
</dbReference>
<dbReference type="HAMAP" id="MF_01315">
    <property type="entry name" value="Ribosomal_uS13"/>
    <property type="match status" value="1"/>
</dbReference>
<dbReference type="InterPro" id="IPR027437">
    <property type="entry name" value="Rbsml_uS13_C"/>
</dbReference>
<dbReference type="InterPro" id="IPR001892">
    <property type="entry name" value="Ribosomal_uS13"/>
</dbReference>
<dbReference type="InterPro" id="IPR010979">
    <property type="entry name" value="Ribosomal_uS13-like_H2TH"/>
</dbReference>
<dbReference type="InterPro" id="IPR019980">
    <property type="entry name" value="Ribosomal_uS13_bac-type"/>
</dbReference>
<dbReference type="InterPro" id="IPR018269">
    <property type="entry name" value="Ribosomal_uS13_CS"/>
</dbReference>
<dbReference type="NCBIfam" id="TIGR03631">
    <property type="entry name" value="uS13_bact"/>
    <property type="match status" value="1"/>
</dbReference>
<dbReference type="PANTHER" id="PTHR10871">
    <property type="entry name" value="30S RIBOSOMAL PROTEIN S13/40S RIBOSOMAL PROTEIN S18"/>
    <property type="match status" value="1"/>
</dbReference>
<dbReference type="PANTHER" id="PTHR10871:SF1">
    <property type="entry name" value="SMALL RIBOSOMAL SUBUNIT PROTEIN US13M"/>
    <property type="match status" value="1"/>
</dbReference>
<dbReference type="Pfam" id="PF00416">
    <property type="entry name" value="Ribosomal_S13"/>
    <property type="match status" value="1"/>
</dbReference>
<dbReference type="PIRSF" id="PIRSF002134">
    <property type="entry name" value="Ribosomal_S13"/>
    <property type="match status" value="1"/>
</dbReference>
<dbReference type="SUPFAM" id="SSF46946">
    <property type="entry name" value="S13-like H2TH domain"/>
    <property type="match status" value="1"/>
</dbReference>
<dbReference type="PROSITE" id="PS00646">
    <property type="entry name" value="RIBOSOMAL_S13_1"/>
    <property type="match status" value="1"/>
</dbReference>
<dbReference type="PROSITE" id="PS50159">
    <property type="entry name" value="RIBOSOMAL_S13_2"/>
    <property type="match status" value="1"/>
</dbReference>
<comment type="function">
    <text evidence="1">Located at the top of the head of the 30S subunit, it contacts several helices of the 16S rRNA. In the 70S ribosome it contacts the 23S rRNA (bridge B1a) and protein L5 of the 50S subunit (bridge B1b), connecting the 2 subunits; these bridges are implicated in subunit movement. Contacts the tRNAs in the A and P-sites.</text>
</comment>
<comment type="subunit">
    <text evidence="1">Part of the 30S ribosomal subunit. Forms a loose heterodimer with protein S19. Forms two bridges to the 50S subunit in the 70S ribosome.</text>
</comment>
<comment type="similarity">
    <text evidence="1">Belongs to the universal ribosomal protein uS13 family.</text>
</comment>
<protein>
    <recommendedName>
        <fullName evidence="1">Small ribosomal subunit protein uS13</fullName>
    </recommendedName>
    <alternativeName>
        <fullName evidence="3">30S ribosomal protein S13</fullName>
    </alternativeName>
</protein>
<name>RS13_CHLCH</name>
<organism>
    <name type="scientific">Chlorobium chlorochromatii (strain CaD3)</name>
    <dbReference type="NCBI Taxonomy" id="340177"/>
    <lineage>
        <taxon>Bacteria</taxon>
        <taxon>Pseudomonadati</taxon>
        <taxon>Chlorobiota</taxon>
        <taxon>Chlorobiia</taxon>
        <taxon>Chlorobiales</taxon>
        <taxon>Chlorobiaceae</taxon>
        <taxon>Chlorobium/Pelodictyon group</taxon>
        <taxon>Chlorobium</taxon>
    </lineage>
</organism>
<gene>
    <name evidence="1" type="primary">rpsM</name>
    <name type="ordered locus">Cag_1827</name>
</gene>
<feature type="chain" id="PRO_0000230492" description="Small ribosomal subunit protein uS13">
    <location>
        <begin position="1"/>
        <end position="125"/>
    </location>
</feature>
<feature type="region of interest" description="Disordered" evidence="2">
    <location>
        <begin position="94"/>
        <end position="125"/>
    </location>
</feature>
<accession>Q3APJ7</accession>
<evidence type="ECO:0000255" key="1">
    <source>
        <dbReference type="HAMAP-Rule" id="MF_01315"/>
    </source>
</evidence>
<evidence type="ECO:0000256" key="2">
    <source>
        <dbReference type="SAM" id="MobiDB-lite"/>
    </source>
</evidence>
<evidence type="ECO:0000305" key="3"/>
<proteinExistence type="inferred from homology"/>